<evidence type="ECO:0000255" key="1">
    <source>
        <dbReference type="HAMAP-Rule" id="MF_01174"/>
    </source>
</evidence>
<reference key="1">
    <citation type="submission" date="2006-08" db="EMBL/GenBank/DDBJ databases">
        <title>Complete sequence of Shewanella frigidimarina NCIMB 400.</title>
        <authorList>
            <consortium name="US DOE Joint Genome Institute"/>
            <person name="Copeland A."/>
            <person name="Lucas S."/>
            <person name="Lapidus A."/>
            <person name="Barry K."/>
            <person name="Detter J.C."/>
            <person name="Glavina del Rio T."/>
            <person name="Hammon N."/>
            <person name="Israni S."/>
            <person name="Dalin E."/>
            <person name="Tice H."/>
            <person name="Pitluck S."/>
            <person name="Fredrickson J.K."/>
            <person name="Kolker E."/>
            <person name="McCuel L.A."/>
            <person name="DiChristina T."/>
            <person name="Nealson K.H."/>
            <person name="Newman D."/>
            <person name="Tiedje J.M."/>
            <person name="Zhou J."/>
            <person name="Romine M.F."/>
            <person name="Culley D.E."/>
            <person name="Serres M."/>
            <person name="Chertkov O."/>
            <person name="Brettin T."/>
            <person name="Bruce D."/>
            <person name="Han C."/>
            <person name="Tapia R."/>
            <person name="Gilna P."/>
            <person name="Schmutz J."/>
            <person name="Larimer F."/>
            <person name="Land M."/>
            <person name="Hauser L."/>
            <person name="Kyrpides N."/>
            <person name="Mikhailova N."/>
            <person name="Richardson P."/>
        </authorList>
    </citation>
    <scope>NUCLEOTIDE SEQUENCE [LARGE SCALE GENOMIC DNA]</scope>
    <source>
        <strain>NCIMB 400</strain>
    </source>
</reference>
<organism>
    <name type="scientific">Shewanella frigidimarina (strain NCIMB 400)</name>
    <dbReference type="NCBI Taxonomy" id="318167"/>
    <lineage>
        <taxon>Bacteria</taxon>
        <taxon>Pseudomonadati</taxon>
        <taxon>Pseudomonadota</taxon>
        <taxon>Gammaproteobacteria</taxon>
        <taxon>Alteromonadales</taxon>
        <taxon>Shewanellaceae</taxon>
        <taxon>Shewanella</taxon>
    </lineage>
</organism>
<keyword id="KW-0056">Arginine metabolism</keyword>
<keyword id="KW-0520">NAD</keyword>
<keyword id="KW-0560">Oxidoreductase</keyword>
<keyword id="KW-1185">Reference proteome</keyword>
<name>ASTD_SHEFN</name>
<proteinExistence type="inferred from homology"/>
<gene>
    <name evidence="1" type="primary">astD</name>
    <name type="ordered locus">Sfri_3297</name>
</gene>
<sequence length="486" mass="51484">MTQYIQGQWLAGEGHEINSKNPANGDVIWQGNTATATQVNAAVDAARAAQFDWFMLGYEARLAIVEAYRAQLEANKAEIAETIAQETGKPQWETATEVGAMIGKIALSAKAHDKRTGTETNDLPAGRAVLRHKPHGVVAVFGPYNFPGHLPNGHIVPALLAGNTVVFKPSELTPKVAELMLKCWDKAGLPQGVVNLVQGEVETGKALASHPQIDGLFFTGSSRTGHILHEQYAGLPGKILALEMGGNNPLIVKGVTDTKAAVHDIIQSAYISSGQRCTCARRLYIEEGAQGDALIAELVKAIKQIKVGAWNVQPQPFMGSMISETAARGMVAAQATLQSLGGVSLVELVQVEAGTGLVTPGLIDVTKVAELPDEEYFGPLLQLVRYSDFDQAIHLANATRYGLSAGLLADSREDYDYFLARIRAGIVNWNKQITGASGAAPFGGVGASGNHRASAFYAADYCAYPVASMEADAVSLPATLSPGLSI</sequence>
<comment type="function">
    <text evidence="1">Catalyzes the NAD-dependent reduction of succinylglutamate semialdehyde into succinylglutamate.</text>
</comment>
<comment type="catalytic activity">
    <reaction evidence="1">
        <text>N-succinyl-L-glutamate 5-semialdehyde + NAD(+) + H2O = N-succinyl-L-glutamate + NADH + 2 H(+)</text>
        <dbReference type="Rhea" id="RHEA:10812"/>
        <dbReference type="ChEBI" id="CHEBI:15377"/>
        <dbReference type="ChEBI" id="CHEBI:15378"/>
        <dbReference type="ChEBI" id="CHEBI:57540"/>
        <dbReference type="ChEBI" id="CHEBI:57945"/>
        <dbReference type="ChEBI" id="CHEBI:58520"/>
        <dbReference type="ChEBI" id="CHEBI:58763"/>
        <dbReference type="EC" id="1.2.1.71"/>
    </reaction>
</comment>
<comment type="pathway">
    <text evidence="1">Amino-acid degradation; L-arginine degradation via AST pathway; L-glutamate and succinate from L-arginine: step 4/5.</text>
</comment>
<comment type="similarity">
    <text evidence="1">Belongs to the aldehyde dehydrogenase family. AstD subfamily.</text>
</comment>
<feature type="chain" id="PRO_0000262425" description="N-succinylglutamate 5-semialdehyde dehydrogenase">
    <location>
        <begin position="1"/>
        <end position="486"/>
    </location>
</feature>
<feature type="active site" evidence="1">
    <location>
        <position position="243"/>
    </location>
</feature>
<feature type="active site" evidence="1">
    <location>
        <position position="277"/>
    </location>
</feature>
<feature type="binding site" evidence="1">
    <location>
        <begin position="220"/>
        <end position="225"/>
    </location>
    <ligand>
        <name>NAD(+)</name>
        <dbReference type="ChEBI" id="CHEBI:57540"/>
    </ligand>
</feature>
<accession>Q07XY1</accession>
<dbReference type="EC" id="1.2.1.71" evidence="1"/>
<dbReference type="EMBL" id="CP000447">
    <property type="protein sequence ID" value="ABI73133.1"/>
    <property type="molecule type" value="Genomic_DNA"/>
</dbReference>
<dbReference type="RefSeq" id="WP_011638736.1">
    <property type="nucleotide sequence ID" value="NC_008345.1"/>
</dbReference>
<dbReference type="SMR" id="Q07XY1"/>
<dbReference type="STRING" id="318167.Sfri_3297"/>
<dbReference type="KEGG" id="sfr:Sfri_3297"/>
<dbReference type="eggNOG" id="COG1012">
    <property type="taxonomic scope" value="Bacteria"/>
</dbReference>
<dbReference type="HOGENOM" id="CLU_005391_1_0_6"/>
<dbReference type="OrthoDB" id="9812625at2"/>
<dbReference type="UniPathway" id="UPA00185">
    <property type="reaction ID" value="UER00282"/>
</dbReference>
<dbReference type="Proteomes" id="UP000000684">
    <property type="component" value="Chromosome"/>
</dbReference>
<dbReference type="GO" id="GO:0043824">
    <property type="term" value="F:succinylglutamate-semialdehyde dehydrogenase activity"/>
    <property type="evidence" value="ECO:0007669"/>
    <property type="project" value="UniProtKB-EC"/>
</dbReference>
<dbReference type="GO" id="GO:0019544">
    <property type="term" value="P:arginine catabolic process to glutamate"/>
    <property type="evidence" value="ECO:0007669"/>
    <property type="project" value="UniProtKB-UniRule"/>
</dbReference>
<dbReference type="GO" id="GO:0019545">
    <property type="term" value="P:arginine catabolic process to succinate"/>
    <property type="evidence" value="ECO:0007669"/>
    <property type="project" value="UniProtKB-UniRule"/>
</dbReference>
<dbReference type="CDD" id="cd07095">
    <property type="entry name" value="ALDH_SGSD_AstD"/>
    <property type="match status" value="1"/>
</dbReference>
<dbReference type="FunFam" id="3.40.309.10:FF:000013">
    <property type="entry name" value="N-succinylglutamate 5-semialdehyde dehydrogenase"/>
    <property type="match status" value="1"/>
</dbReference>
<dbReference type="FunFam" id="3.40.605.10:FF:000010">
    <property type="entry name" value="N-succinylglutamate 5-semialdehyde dehydrogenase"/>
    <property type="match status" value="1"/>
</dbReference>
<dbReference type="Gene3D" id="3.40.605.10">
    <property type="entry name" value="Aldehyde Dehydrogenase, Chain A, domain 1"/>
    <property type="match status" value="1"/>
</dbReference>
<dbReference type="Gene3D" id="3.40.309.10">
    <property type="entry name" value="Aldehyde Dehydrogenase, Chain A, domain 2"/>
    <property type="match status" value="1"/>
</dbReference>
<dbReference type="HAMAP" id="MF_01174">
    <property type="entry name" value="Aldedh_AstD"/>
    <property type="match status" value="1"/>
</dbReference>
<dbReference type="InterPro" id="IPR016161">
    <property type="entry name" value="Ald_DH/histidinol_DH"/>
</dbReference>
<dbReference type="InterPro" id="IPR016163">
    <property type="entry name" value="Ald_DH_C"/>
</dbReference>
<dbReference type="InterPro" id="IPR016160">
    <property type="entry name" value="Ald_DH_CS_CYS"/>
</dbReference>
<dbReference type="InterPro" id="IPR029510">
    <property type="entry name" value="Ald_DH_CS_GLU"/>
</dbReference>
<dbReference type="InterPro" id="IPR016162">
    <property type="entry name" value="Ald_DH_N"/>
</dbReference>
<dbReference type="InterPro" id="IPR015590">
    <property type="entry name" value="Aldehyde_DH_dom"/>
</dbReference>
<dbReference type="InterPro" id="IPR017649">
    <property type="entry name" value="SuccinylGlu_semiald_DH_AstD"/>
</dbReference>
<dbReference type="NCBIfam" id="TIGR03240">
    <property type="entry name" value="arg_catab_astD"/>
    <property type="match status" value="1"/>
</dbReference>
<dbReference type="NCBIfam" id="NF006992">
    <property type="entry name" value="PRK09457.1"/>
    <property type="match status" value="1"/>
</dbReference>
<dbReference type="PANTHER" id="PTHR11699">
    <property type="entry name" value="ALDEHYDE DEHYDROGENASE-RELATED"/>
    <property type="match status" value="1"/>
</dbReference>
<dbReference type="Pfam" id="PF00171">
    <property type="entry name" value="Aldedh"/>
    <property type="match status" value="1"/>
</dbReference>
<dbReference type="SUPFAM" id="SSF53720">
    <property type="entry name" value="ALDH-like"/>
    <property type="match status" value="1"/>
</dbReference>
<dbReference type="PROSITE" id="PS00070">
    <property type="entry name" value="ALDEHYDE_DEHYDR_CYS"/>
    <property type="match status" value="1"/>
</dbReference>
<dbReference type="PROSITE" id="PS00687">
    <property type="entry name" value="ALDEHYDE_DEHYDR_GLU"/>
    <property type="match status" value="1"/>
</dbReference>
<protein>
    <recommendedName>
        <fullName evidence="1">N-succinylglutamate 5-semialdehyde dehydrogenase</fullName>
        <ecNumber evidence="1">1.2.1.71</ecNumber>
    </recommendedName>
    <alternativeName>
        <fullName evidence="1">Succinylglutamic semialdehyde dehydrogenase</fullName>
        <shortName evidence="1">SGSD</shortName>
    </alternativeName>
</protein>